<evidence type="ECO:0000255" key="1">
    <source>
        <dbReference type="HAMAP-Rule" id="MF_01043"/>
    </source>
</evidence>
<reference key="1">
    <citation type="submission" date="2006-12" db="EMBL/GenBank/DDBJ databases">
        <title>Complete sequence of Shewanella sp. W3-18-1.</title>
        <authorList>
            <consortium name="US DOE Joint Genome Institute"/>
            <person name="Copeland A."/>
            <person name="Lucas S."/>
            <person name="Lapidus A."/>
            <person name="Barry K."/>
            <person name="Detter J.C."/>
            <person name="Glavina del Rio T."/>
            <person name="Hammon N."/>
            <person name="Israni S."/>
            <person name="Dalin E."/>
            <person name="Tice H."/>
            <person name="Pitluck S."/>
            <person name="Chain P."/>
            <person name="Malfatti S."/>
            <person name="Shin M."/>
            <person name="Vergez L."/>
            <person name="Schmutz J."/>
            <person name="Larimer F."/>
            <person name="Land M."/>
            <person name="Hauser L."/>
            <person name="Kyrpides N."/>
            <person name="Lykidis A."/>
            <person name="Tiedje J."/>
            <person name="Richardson P."/>
        </authorList>
    </citation>
    <scope>NUCLEOTIDE SEQUENCE [LARGE SCALE GENOMIC DNA]</scope>
    <source>
        <strain>W3-18-1</strain>
    </source>
</reference>
<proteinExistence type="inferred from homology"/>
<protein>
    <recommendedName>
        <fullName evidence="1">Glycerol-3-phosphate acyltransferase</fullName>
    </recommendedName>
    <alternativeName>
        <fullName evidence="1">Acyl-PO4 G3P acyltransferase</fullName>
    </alternativeName>
    <alternativeName>
        <fullName evidence="1">Acyl-phosphate--glycerol-3-phosphate acyltransferase</fullName>
    </alternativeName>
    <alternativeName>
        <fullName evidence="1">G3P acyltransferase</fullName>
        <shortName evidence="1">GPAT</shortName>
        <ecNumber evidence="1">2.3.1.275</ecNumber>
    </alternativeName>
    <alternativeName>
        <fullName evidence="1">Lysophosphatidic acid synthase</fullName>
        <shortName evidence="1">LPA synthase</shortName>
    </alternativeName>
</protein>
<feature type="chain" id="PRO_1000064228" description="Glycerol-3-phosphate acyltransferase">
    <location>
        <begin position="1"/>
        <end position="203"/>
    </location>
</feature>
<feature type="transmembrane region" description="Helical" evidence="1">
    <location>
        <begin position="6"/>
        <end position="26"/>
    </location>
</feature>
<feature type="transmembrane region" description="Helical" evidence="1">
    <location>
        <begin position="82"/>
        <end position="102"/>
    </location>
</feature>
<feature type="transmembrane region" description="Helical" evidence="1">
    <location>
        <begin position="118"/>
        <end position="138"/>
    </location>
</feature>
<feature type="transmembrane region" description="Helical" evidence="1">
    <location>
        <begin position="141"/>
        <end position="161"/>
    </location>
</feature>
<organism>
    <name type="scientific">Shewanella sp. (strain W3-18-1)</name>
    <dbReference type="NCBI Taxonomy" id="351745"/>
    <lineage>
        <taxon>Bacteria</taxon>
        <taxon>Pseudomonadati</taxon>
        <taxon>Pseudomonadota</taxon>
        <taxon>Gammaproteobacteria</taxon>
        <taxon>Alteromonadales</taxon>
        <taxon>Shewanellaceae</taxon>
        <taxon>Shewanella</taxon>
    </lineage>
</organism>
<comment type="function">
    <text evidence="1">Catalyzes the transfer of an acyl group from acyl-phosphate (acyl-PO(4)) to glycerol-3-phosphate (G3P) to form lysophosphatidic acid (LPA). This enzyme utilizes acyl-phosphate as fatty acyl donor, but not acyl-CoA or acyl-ACP.</text>
</comment>
<comment type="catalytic activity">
    <reaction evidence="1">
        <text>an acyl phosphate + sn-glycerol 3-phosphate = a 1-acyl-sn-glycero-3-phosphate + phosphate</text>
        <dbReference type="Rhea" id="RHEA:34075"/>
        <dbReference type="ChEBI" id="CHEBI:43474"/>
        <dbReference type="ChEBI" id="CHEBI:57597"/>
        <dbReference type="ChEBI" id="CHEBI:57970"/>
        <dbReference type="ChEBI" id="CHEBI:59918"/>
        <dbReference type="EC" id="2.3.1.275"/>
    </reaction>
</comment>
<comment type="pathway">
    <text evidence="1">Lipid metabolism; phospholipid metabolism.</text>
</comment>
<comment type="subunit">
    <text evidence="1">Probably interacts with PlsX.</text>
</comment>
<comment type="subcellular location">
    <subcellularLocation>
        <location evidence="1">Cell inner membrane</location>
        <topology evidence="1">Multi-pass membrane protein</topology>
    </subcellularLocation>
</comment>
<comment type="similarity">
    <text evidence="1">Belongs to the PlsY family.</text>
</comment>
<gene>
    <name evidence="1" type="primary">plsY</name>
    <name type="ordered locus">Sputw3181_3055</name>
</gene>
<sequence length="203" mass="21731">MSQLTLTLLMIVSAYLAGSISSAVLVCRMRGLPDPRSEGSGNPGATNVLRIGGASSAAMVLFFDMLKGALPTYLAYLMGIDAISLGLIAIAACLGHIYPIFFGFKGGKGVATAFGAMAPIGDDLAICLMASWVVLLLISRYSSLAAIITALLAPLYTWWLDERFTIPVAMLSTLIIIRHKDNIQRLLKGEESKVSRKKRPKNP</sequence>
<dbReference type="EC" id="2.3.1.275" evidence="1"/>
<dbReference type="EMBL" id="CP000503">
    <property type="protein sequence ID" value="ABM25872.1"/>
    <property type="molecule type" value="Genomic_DNA"/>
</dbReference>
<dbReference type="RefSeq" id="WP_011790324.1">
    <property type="nucleotide sequence ID" value="NC_008750.1"/>
</dbReference>
<dbReference type="SMR" id="A1RMH7"/>
<dbReference type="GeneID" id="67442626"/>
<dbReference type="KEGG" id="shw:Sputw3181_3055"/>
<dbReference type="HOGENOM" id="CLU_081254_0_2_6"/>
<dbReference type="UniPathway" id="UPA00085"/>
<dbReference type="Proteomes" id="UP000002597">
    <property type="component" value="Chromosome"/>
</dbReference>
<dbReference type="GO" id="GO:0005886">
    <property type="term" value="C:plasma membrane"/>
    <property type="evidence" value="ECO:0007669"/>
    <property type="project" value="UniProtKB-SubCell"/>
</dbReference>
<dbReference type="GO" id="GO:0043772">
    <property type="term" value="F:acyl-phosphate glycerol-3-phosphate acyltransferase activity"/>
    <property type="evidence" value="ECO:0007669"/>
    <property type="project" value="UniProtKB-UniRule"/>
</dbReference>
<dbReference type="GO" id="GO:0008654">
    <property type="term" value="P:phospholipid biosynthetic process"/>
    <property type="evidence" value="ECO:0007669"/>
    <property type="project" value="UniProtKB-UniRule"/>
</dbReference>
<dbReference type="HAMAP" id="MF_01043">
    <property type="entry name" value="PlsY"/>
    <property type="match status" value="1"/>
</dbReference>
<dbReference type="InterPro" id="IPR003811">
    <property type="entry name" value="G3P_acylTferase_PlsY"/>
</dbReference>
<dbReference type="NCBIfam" id="TIGR00023">
    <property type="entry name" value="glycerol-3-phosphate 1-O-acyltransferase PlsY"/>
    <property type="match status" value="1"/>
</dbReference>
<dbReference type="PANTHER" id="PTHR30309:SF0">
    <property type="entry name" value="GLYCEROL-3-PHOSPHATE ACYLTRANSFERASE-RELATED"/>
    <property type="match status" value="1"/>
</dbReference>
<dbReference type="PANTHER" id="PTHR30309">
    <property type="entry name" value="INNER MEMBRANE PROTEIN YGIH"/>
    <property type="match status" value="1"/>
</dbReference>
<dbReference type="Pfam" id="PF02660">
    <property type="entry name" value="G3P_acyltransf"/>
    <property type="match status" value="1"/>
</dbReference>
<dbReference type="SMART" id="SM01207">
    <property type="entry name" value="G3P_acyltransf"/>
    <property type="match status" value="1"/>
</dbReference>
<accession>A1RMH7</accession>
<name>PLSY_SHESW</name>
<keyword id="KW-0997">Cell inner membrane</keyword>
<keyword id="KW-1003">Cell membrane</keyword>
<keyword id="KW-0444">Lipid biosynthesis</keyword>
<keyword id="KW-0443">Lipid metabolism</keyword>
<keyword id="KW-0472">Membrane</keyword>
<keyword id="KW-0594">Phospholipid biosynthesis</keyword>
<keyword id="KW-1208">Phospholipid metabolism</keyword>
<keyword id="KW-0808">Transferase</keyword>
<keyword id="KW-0812">Transmembrane</keyword>
<keyword id="KW-1133">Transmembrane helix</keyword>